<proteinExistence type="inferred from homology"/>
<keyword id="KW-0210">Decarboxylase</keyword>
<keyword id="KW-0456">Lyase</keyword>
<keyword id="KW-0665">Pyrimidine biosynthesis</keyword>
<dbReference type="EC" id="4.1.1.23" evidence="1"/>
<dbReference type="EMBL" id="CP000943">
    <property type="protein sequence ID" value="ACA17068.1"/>
    <property type="molecule type" value="Genomic_DNA"/>
</dbReference>
<dbReference type="RefSeq" id="WP_012332474.1">
    <property type="nucleotide sequence ID" value="NC_010511.1"/>
</dbReference>
<dbReference type="SMR" id="B0UL68"/>
<dbReference type="STRING" id="426117.M446_2629"/>
<dbReference type="KEGG" id="met:M446_2629"/>
<dbReference type="eggNOG" id="COG0284">
    <property type="taxonomic scope" value="Bacteria"/>
</dbReference>
<dbReference type="HOGENOM" id="CLU_067069_1_0_5"/>
<dbReference type="UniPathway" id="UPA00070">
    <property type="reaction ID" value="UER00120"/>
</dbReference>
<dbReference type="GO" id="GO:0005829">
    <property type="term" value="C:cytosol"/>
    <property type="evidence" value="ECO:0007669"/>
    <property type="project" value="TreeGrafter"/>
</dbReference>
<dbReference type="GO" id="GO:0004590">
    <property type="term" value="F:orotidine-5'-phosphate decarboxylase activity"/>
    <property type="evidence" value="ECO:0007669"/>
    <property type="project" value="UniProtKB-UniRule"/>
</dbReference>
<dbReference type="GO" id="GO:0006207">
    <property type="term" value="P:'de novo' pyrimidine nucleobase biosynthetic process"/>
    <property type="evidence" value="ECO:0007669"/>
    <property type="project" value="InterPro"/>
</dbReference>
<dbReference type="GO" id="GO:0044205">
    <property type="term" value="P:'de novo' UMP biosynthetic process"/>
    <property type="evidence" value="ECO:0007669"/>
    <property type="project" value="UniProtKB-UniRule"/>
</dbReference>
<dbReference type="CDD" id="cd04725">
    <property type="entry name" value="OMP_decarboxylase_like"/>
    <property type="match status" value="1"/>
</dbReference>
<dbReference type="Gene3D" id="3.20.20.70">
    <property type="entry name" value="Aldolase class I"/>
    <property type="match status" value="1"/>
</dbReference>
<dbReference type="HAMAP" id="MF_01200_B">
    <property type="entry name" value="OMPdecase_type1_B"/>
    <property type="match status" value="1"/>
</dbReference>
<dbReference type="InterPro" id="IPR013785">
    <property type="entry name" value="Aldolase_TIM"/>
</dbReference>
<dbReference type="InterPro" id="IPR014732">
    <property type="entry name" value="OMPdecase"/>
</dbReference>
<dbReference type="InterPro" id="IPR018089">
    <property type="entry name" value="OMPdecase_AS"/>
</dbReference>
<dbReference type="InterPro" id="IPR047596">
    <property type="entry name" value="OMPdecase_bac"/>
</dbReference>
<dbReference type="InterPro" id="IPR001754">
    <property type="entry name" value="OMPdeCOase_dom"/>
</dbReference>
<dbReference type="InterPro" id="IPR011060">
    <property type="entry name" value="RibuloseP-bd_barrel"/>
</dbReference>
<dbReference type="NCBIfam" id="NF001273">
    <property type="entry name" value="PRK00230.1"/>
    <property type="match status" value="1"/>
</dbReference>
<dbReference type="NCBIfam" id="TIGR01740">
    <property type="entry name" value="pyrF"/>
    <property type="match status" value="1"/>
</dbReference>
<dbReference type="PANTHER" id="PTHR32119">
    <property type="entry name" value="OROTIDINE 5'-PHOSPHATE DECARBOXYLASE"/>
    <property type="match status" value="1"/>
</dbReference>
<dbReference type="PANTHER" id="PTHR32119:SF2">
    <property type="entry name" value="OROTIDINE 5'-PHOSPHATE DECARBOXYLASE"/>
    <property type="match status" value="1"/>
</dbReference>
<dbReference type="Pfam" id="PF00215">
    <property type="entry name" value="OMPdecase"/>
    <property type="match status" value="1"/>
</dbReference>
<dbReference type="SMART" id="SM00934">
    <property type="entry name" value="OMPdecase"/>
    <property type="match status" value="1"/>
</dbReference>
<dbReference type="SUPFAM" id="SSF51366">
    <property type="entry name" value="Ribulose-phoshate binding barrel"/>
    <property type="match status" value="1"/>
</dbReference>
<dbReference type="PROSITE" id="PS00156">
    <property type="entry name" value="OMPDECASE"/>
    <property type="match status" value="1"/>
</dbReference>
<protein>
    <recommendedName>
        <fullName evidence="1">Orotidine 5'-phosphate decarboxylase</fullName>
        <ecNumber evidence="1">4.1.1.23</ecNumber>
    </recommendedName>
    <alternativeName>
        <fullName evidence="1">OMP decarboxylase</fullName>
        <shortName evidence="1">OMPDCase</shortName>
        <shortName evidence="1">OMPdecase</shortName>
    </alternativeName>
</protein>
<gene>
    <name evidence="1" type="primary">pyrF</name>
    <name type="ordered locus">M446_2629</name>
</gene>
<organism>
    <name type="scientific">Methylobacterium sp. (strain 4-46)</name>
    <dbReference type="NCBI Taxonomy" id="426117"/>
    <lineage>
        <taxon>Bacteria</taxon>
        <taxon>Pseudomonadati</taxon>
        <taxon>Pseudomonadota</taxon>
        <taxon>Alphaproteobacteria</taxon>
        <taxon>Hyphomicrobiales</taxon>
        <taxon>Methylobacteriaceae</taxon>
        <taxon>Methylobacterium</taxon>
    </lineage>
</organism>
<reference key="1">
    <citation type="submission" date="2008-02" db="EMBL/GenBank/DDBJ databases">
        <title>Complete sequence of chromosome of Methylobacterium sp. 4-46.</title>
        <authorList>
            <consortium name="US DOE Joint Genome Institute"/>
            <person name="Copeland A."/>
            <person name="Lucas S."/>
            <person name="Lapidus A."/>
            <person name="Glavina del Rio T."/>
            <person name="Dalin E."/>
            <person name="Tice H."/>
            <person name="Bruce D."/>
            <person name="Goodwin L."/>
            <person name="Pitluck S."/>
            <person name="Chertkov O."/>
            <person name="Brettin T."/>
            <person name="Detter J.C."/>
            <person name="Han C."/>
            <person name="Kuske C.R."/>
            <person name="Schmutz J."/>
            <person name="Larimer F."/>
            <person name="Land M."/>
            <person name="Hauser L."/>
            <person name="Kyrpides N."/>
            <person name="Ivanova N."/>
            <person name="Marx C.J."/>
            <person name="Richardson P."/>
        </authorList>
    </citation>
    <scope>NUCLEOTIDE SEQUENCE [LARGE SCALE GENOMIC DNA]</scope>
    <source>
        <strain>4-46</strain>
    </source>
</reference>
<accession>B0UL68</accession>
<comment type="function">
    <text evidence="1">Catalyzes the decarboxylation of orotidine 5'-monophosphate (OMP) to uridine 5'-monophosphate (UMP).</text>
</comment>
<comment type="catalytic activity">
    <reaction evidence="1">
        <text>orotidine 5'-phosphate + H(+) = UMP + CO2</text>
        <dbReference type="Rhea" id="RHEA:11596"/>
        <dbReference type="ChEBI" id="CHEBI:15378"/>
        <dbReference type="ChEBI" id="CHEBI:16526"/>
        <dbReference type="ChEBI" id="CHEBI:57538"/>
        <dbReference type="ChEBI" id="CHEBI:57865"/>
        <dbReference type="EC" id="4.1.1.23"/>
    </reaction>
</comment>
<comment type="pathway">
    <text evidence="1">Pyrimidine metabolism; UMP biosynthesis via de novo pathway; UMP from orotate: step 2/2.</text>
</comment>
<comment type="subunit">
    <text evidence="1">Homodimer.</text>
</comment>
<comment type="similarity">
    <text evidence="1">Belongs to the OMP decarboxylase family. Type 1 subfamily.</text>
</comment>
<name>PYRF_METS4</name>
<sequence>MTEPLTPRDRLIVALDMASRDEAERLIDRIGDAAAFYKIGYRLGYAGGLALAERLAASGVKVFLDLKLHDIGNTVEEGVQSLARLGAHLLTVHAYPQTMRAARRGRDSVPGSALRLLAVTVLTSYDDADLREAGYAGGVADLVASRAAAARDIGIDGIVCAATEAAAVRAVIGPDRLIVTPGIRPAGAASGDQKRVVTPAAAIRAGADHLVVGRPITEAADPRAAARSIVSEIAEA</sequence>
<evidence type="ECO:0000255" key="1">
    <source>
        <dbReference type="HAMAP-Rule" id="MF_01200"/>
    </source>
</evidence>
<feature type="chain" id="PRO_1000138543" description="Orotidine 5'-phosphate decarboxylase">
    <location>
        <begin position="1"/>
        <end position="236"/>
    </location>
</feature>
<feature type="active site" description="Proton donor" evidence="1">
    <location>
        <position position="67"/>
    </location>
</feature>
<feature type="binding site" evidence="1">
    <location>
        <position position="16"/>
    </location>
    <ligand>
        <name>substrate</name>
    </ligand>
</feature>
<feature type="binding site" evidence="1">
    <location>
        <position position="38"/>
    </location>
    <ligand>
        <name>substrate</name>
    </ligand>
</feature>
<feature type="binding site" evidence="1">
    <location>
        <begin position="65"/>
        <end position="74"/>
    </location>
    <ligand>
        <name>substrate</name>
    </ligand>
</feature>
<feature type="binding site" evidence="1">
    <location>
        <position position="123"/>
    </location>
    <ligand>
        <name>substrate</name>
    </ligand>
</feature>
<feature type="binding site" evidence="1">
    <location>
        <position position="184"/>
    </location>
    <ligand>
        <name>substrate</name>
    </ligand>
</feature>
<feature type="binding site" evidence="1">
    <location>
        <position position="193"/>
    </location>
    <ligand>
        <name>substrate</name>
    </ligand>
</feature>
<feature type="binding site" evidence="1">
    <location>
        <position position="213"/>
    </location>
    <ligand>
        <name>substrate</name>
    </ligand>
</feature>
<feature type="binding site" evidence="1">
    <location>
        <position position="214"/>
    </location>
    <ligand>
        <name>substrate</name>
    </ligand>
</feature>